<feature type="chain" id="PRO_1000089555" description="LexA repressor">
    <location>
        <begin position="1"/>
        <end position="216"/>
    </location>
</feature>
<feature type="DNA-binding region" description="H-T-H motif" evidence="1">
    <location>
        <begin position="28"/>
        <end position="48"/>
    </location>
</feature>
<feature type="active site" description="For autocatalytic cleavage activity" evidence="1">
    <location>
        <position position="134"/>
    </location>
</feature>
<feature type="active site" description="For autocatalytic cleavage activity" evidence="1">
    <location>
        <position position="171"/>
    </location>
</feature>
<feature type="site" description="Cleavage; by autolysis" evidence="1">
    <location>
        <begin position="99"/>
        <end position="100"/>
    </location>
</feature>
<comment type="function">
    <text evidence="1">Represses a number of genes involved in the response to DNA damage (SOS response), including recA and lexA. In the presence of single-stranded DNA, RecA interacts with LexA causing an autocatalytic cleavage which disrupts the DNA-binding part of LexA, leading to derepression of the SOS regulon and eventually DNA repair.</text>
</comment>
<comment type="catalytic activity">
    <reaction evidence="1">
        <text>Hydrolysis of Ala-|-Gly bond in repressor LexA.</text>
        <dbReference type="EC" id="3.4.21.88"/>
    </reaction>
</comment>
<comment type="subunit">
    <text evidence="1">Homodimer.</text>
</comment>
<comment type="similarity">
    <text evidence="1">Belongs to the peptidase S24 family.</text>
</comment>
<protein>
    <recommendedName>
        <fullName evidence="1">LexA repressor</fullName>
        <ecNumber evidence="1">3.4.21.88</ecNumber>
    </recommendedName>
</protein>
<accession>B2T3L9</accession>
<name>LEXA_PARPJ</name>
<evidence type="ECO:0000255" key="1">
    <source>
        <dbReference type="HAMAP-Rule" id="MF_00015"/>
    </source>
</evidence>
<proteinExistence type="inferred from homology"/>
<reference key="1">
    <citation type="journal article" date="2011" name="J. Bacteriol.">
        <title>Complete genome sequence of the plant growth-promoting endophyte Burkholderia phytofirmans strain PsJN.</title>
        <authorList>
            <person name="Weilharter A."/>
            <person name="Mitter B."/>
            <person name="Shin M.V."/>
            <person name="Chain P.S."/>
            <person name="Nowak J."/>
            <person name="Sessitsch A."/>
        </authorList>
    </citation>
    <scope>NUCLEOTIDE SEQUENCE [LARGE SCALE GENOMIC DNA]</scope>
    <source>
        <strain>DSM 17436 / LMG 22146 / PsJN</strain>
    </source>
</reference>
<dbReference type="EC" id="3.4.21.88" evidence="1"/>
<dbReference type="EMBL" id="CP001052">
    <property type="protein sequence ID" value="ACD16180.1"/>
    <property type="molecule type" value="Genomic_DNA"/>
</dbReference>
<dbReference type="RefSeq" id="WP_012432789.1">
    <property type="nucleotide sequence ID" value="NC_010681.1"/>
</dbReference>
<dbReference type="SMR" id="B2T3L9"/>
<dbReference type="STRING" id="398527.Bphyt_1772"/>
<dbReference type="MEROPS" id="S24.001"/>
<dbReference type="GeneID" id="97305435"/>
<dbReference type="KEGG" id="bpy:Bphyt_1772"/>
<dbReference type="eggNOG" id="COG1974">
    <property type="taxonomic scope" value="Bacteria"/>
</dbReference>
<dbReference type="HOGENOM" id="CLU_066192_45_3_4"/>
<dbReference type="OrthoDB" id="9802364at2"/>
<dbReference type="Proteomes" id="UP000001739">
    <property type="component" value="Chromosome 1"/>
</dbReference>
<dbReference type="GO" id="GO:0003677">
    <property type="term" value="F:DNA binding"/>
    <property type="evidence" value="ECO:0007669"/>
    <property type="project" value="UniProtKB-UniRule"/>
</dbReference>
<dbReference type="GO" id="GO:0004252">
    <property type="term" value="F:serine-type endopeptidase activity"/>
    <property type="evidence" value="ECO:0007669"/>
    <property type="project" value="UniProtKB-UniRule"/>
</dbReference>
<dbReference type="GO" id="GO:0006281">
    <property type="term" value="P:DNA repair"/>
    <property type="evidence" value="ECO:0007669"/>
    <property type="project" value="UniProtKB-UniRule"/>
</dbReference>
<dbReference type="GO" id="GO:0006260">
    <property type="term" value="P:DNA replication"/>
    <property type="evidence" value="ECO:0007669"/>
    <property type="project" value="UniProtKB-UniRule"/>
</dbReference>
<dbReference type="GO" id="GO:0045892">
    <property type="term" value="P:negative regulation of DNA-templated transcription"/>
    <property type="evidence" value="ECO:0007669"/>
    <property type="project" value="UniProtKB-UniRule"/>
</dbReference>
<dbReference type="GO" id="GO:0006508">
    <property type="term" value="P:proteolysis"/>
    <property type="evidence" value="ECO:0007669"/>
    <property type="project" value="InterPro"/>
</dbReference>
<dbReference type="GO" id="GO:0009432">
    <property type="term" value="P:SOS response"/>
    <property type="evidence" value="ECO:0007669"/>
    <property type="project" value="UniProtKB-UniRule"/>
</dbReference>
<dbReference type="CDD" id="cd06529">
    <property type="entry name" value="S24_LexA-like"/>
    <property type="match status" value="1"/>
</dbReference>
<dbReference type="FunFam" id="1.10.10.10:FF:000009">
    <property type="entry name" value="LexA repressor"/>
    <property type="match status" value="1"/>
</dbReference>
<dbReference type="FunFam" id="2.10.109.10:FF:000001">
    <property type="entry name" value="LexA repressor"/>
    <property type="match status" value="1"/>
</dbReference>
<dbReference type="Gene3D" id="2.10.109.10">
    <property type="entry name" value="Umud Fragment, subunit A"/>
    <property type="match status" value="1"/>
</dbReference>
<dbReference type="Gene3D" id="1.10.10.10">
    <property type="entry name" value="Winged helix-like DNA-binding domain superfamily/Winged helix DNA-binding domain"/>
    <property type="match status" value="1"/>
</dbReference>
<dbReference type="HAMAP" id="MF_00015">
    <property type="entry name" value="LexA"/>
    <property type="match status" value="1"/>
</dbReference>
<dbReference type="InterPro" id="IPR006200">
    <property type="entry name" value="LexA"/>
</dbReference>
<dbReference type="InterPro" id="IPR039418">
    <property type="entry name" value="LexA-like"/>
</dbReference>
<dbReference type="InterPro" id="IPR036286">
    <property type="entry name" value="LexA/Signal_pep-like_sf"/>
</dbReference>
<dbReference type="InterPro" id="IPR006199">
    <property type="entry name" value="LexA_DNA-bd_dom"/>
</dbReference>
<dbReference type="InterPro" id="IPR050077">
    <property type="entry name" value="LexA_repressor"/>
</dbReference>
<dbReference type="InterPro" id="IPR006197">
    <property type="entry name" value="Peptidase_S24_LexA"/>
</dbReference>
<dbReference type="InterPro" id="IPR015927">
    <property type="entry name" value="Peptidase_S24_S26A/B/C"/>
</dbReference>
<dbReference type="InterPro" id="IPR036388">
    <property type="entry name" value="WH-like_DNA-bd_sf"/>
</dbReference>
<dbReference type="InterPro" id="IPR036390">
    <property type="entry name" value="WH_DNA-bd_sf"/>
</dbReference>
<dbReference type="NCBIfam" id="TIGR00498">
    <property type="entry name" value="lexA"/>
    <property type="match status" value="1"/>
</dbReference>
<dbReference type="PANTHER" id="PTHR33516">
    <property type="entry name" value="LEXA REPRESSOR"/>
    <property type="match status" value="1"/>
</dbReference>
<dbReference type="PANTHER" id="PTHR33516:SF2">
    <property type="entry name" value="LEXA REPRESSOR-RELATED"/>
    <property type="match status" value="1"/>
</dbReference>
<dbReference type="Pfam" id="PF01726">
    <property type="entry name" value="LexA_DNA_bind"/>
    <property type="match status" value="1"/>
</dbReference>
<dbReference type="Pfam" id="PF00717">
    <property type="entry name" value="Peptidase_S24"/>
    <property type="match status" value="1"/>
</dbReference>
<dbReference type="PRINTS" id="PR00726">
    <property type="entry name" value="LEXASERPTASE"/>
</dbReference>
<dbReference type="SUPFAM" id="SSF51306">
    <property type="entry name" value="LexA/Signal peptidase"/>
    <property type="match status" value="1"/>
</dbReference>
<dbReference type="SUPFAM" id="SSF46785">
    <property type="entry name" value="Winged helix' DNA-binding domain"/>
    <property type="match status" value="1"/>
</dbReference>
<gene>
    <name evidence="1" type="primary">lexA</name>
    <name type="ordered locus">Bphyt_1772</name>
</gene>
<organism>
    <name type="scientific">Paraburkholderia phytofirmans (strain DSM 17436 / LMG 22146 / PsJN)</name>
    <name type="common">Burkholderia phytofirmans</name>
    <dbReference type="NCBI Taxonomy" id="398527"/>
    <lineage>
        <taxon>Bacteria</taxon>
        <taxon>Pseudomonadati</taxon>
        <taxon>Pseudomonadota</taxon>
        <taxon>Betaproteobacteria</taxon>
        <taxon>Burkholderiales</taxon>
        <taxon>Burkholderiaceae</taxon>
        <taxon>Paraburkholderia</taxon>
    </lineage>
</organism>
<keyword id="KW-0068">Autocatalytic cleavage</keyword>
<keyword id="KW-0227">DNA damage</keyword>
<keyword id="KW-0234">DNA repair</keyword>
<keyword id="KW-0235">DNA replication</keyword>
<keyword id="KW-0238">DNA-binding</keyword>
<keyword id="KW-0378">Hydrolase</keyword>
<keyword id="KW-0678">Repressor</keyword>
<keyword id="KW-0742">SOS response</keyword>
<keyword id="KW-0804">Transcription</keyword>
<keyword id="KW-0805">Transcription regulation</keyword>
<sequence length="216" mass="23476">MTKLTARQQQVFDLIRRAIERTGFPPTRAEIAAELGFSSANSAEEHLRALARKGVIELAAGASRGIRLLAGPEDSPHQFTLPHASIMQLSLPLIGRVAAGSPILAQEHISQHYACDPALFSSKPDYLLKVRGLSMRDAGIFDGDLLAVQKRSEAKDGQIIIARLGDDVTVKRLKRRPNGLELIAENPDYENIFVETGSAEFALEGIAVGLIRPGEF</sequence>